<gene>
    <name evidence="1" type="primary">accA</name>
    <name type="ordered locus">LMHCC_0996</name>
</gene>
<sequence length="318" mass="35226">MANEMEFEKPILELKSKIADLKEYNETSDVDLTNEIEKLEKRLGKLESSIYSNMTAWDKFQVARHPERPTTLDYISLLFEDFMELHGDRAFGDDAAIVGGIATFKGVPVTVIGHQRGKDTKDNLHRNFGMPHPEGFRKALRLMKQADKFGRPIICFIDTKGAYPGRAAEERGQSEAIARNLYEMSDMKVPIISIVIGEGGSGGALALGVGNQIFMLENAVFSVISPEGAAAILWKDASQAKKAAESMRITAGDLFELGITDGIIPEVKGGAHRDLNAQAEEINKTITKSLHALMAFSEEQLIEQRYEKFKKIGVYDTL</sequence>
<feature type="chain" id="PRO_1000148745" description="Acetyl-coenzyme A carboxylase carboxyl transferase subunit alpha">
    <location>
        <begin position="1"/>
        <end position="318"/>
    </location>
</feature>
<feature type="domain" description="CoA carboxyltransferase C-terminal" evidence="2">
    <location>
        <begin position="31"/>
        <end position="292"/>
    </location>
</feature>
<proteinExistence type="inferred from homology"/>
<keyword id="KW-0067">ATP-binding</keyword>
<keyword id="KW-0963">Cytoplasm</keyword>
<keyword id="KW-0275">Fatty acid biosynthesis</keyword>
<keyword id="KW-0276">Fatty acid metabolism</keyword>
<keyword id="KW-0444">Lipid biosynthesis</keyword>
<keyword id="KW-0443">Lipid metabolism</keyword>
<keyword id="KW-0547">Nucleotide-binding</keyword>
<keyword id="KW-0808">Transferase</keyword>
<protein>
    <recommendedName>
        <fullName evidence="1">Acetyl-coenzyme A carboxylase carboxyl transferase subunit alpha</fullName>
        <shortName evidence="1">ACCase subunit alpha</shortName>
        <shortName evidence="1">Acetyl-CoA carboxylase carboxyltransferase subunit alpha</shortName>
        <ecNumber evidence="1">2.1.3.15</ecNumber>
    </recommendedName>
</protein>
<dbReference type="EC" id="2.1.3.15" evidence="1"/>
<dbReference type="EMBL" id="CP001175">
    <property type="protein sequence ID" value="ACK39344.1"/>
    <property type="molecule type" value="Genomic_DNA"/>
</dbReference>
<dbReference type="RefSeq" id="WP_012581258.1">
    <property type="nucleotide sequence ID" value="NC_011660.1"/>
</dbReference>
<dbReference type="SMR" id="B8DHH5"/>
<dbReference type="KEGG" id="lmh:LMHCC_0996"/>
<dbReference type="HOGENOM" id="CLU_015486_0_2_9"/>
<dbReference type="UniPathway" id="UPA00655">
    <property type="reaction ID" value="UER00711"/>
</dbReference>
<dbReference type="GO" id="GO:0009317">
    <property type="term" value="C:acetyl-CoA carboxylase complex"/>
    <property type="evidence" value="ECO:0007669"/>
    <property type="project" value="InterPro"/>
</dbReference>
<dbReference type="GO" id="GO:0003989">
    <property type="term" value="F:acetyl-CoA carboxylase activity"/>
    <property type="evidence" value="ECO:0007669"/>
    <property type="project" value="InterPro"/>
</dbReference>
<dbReference type="GO" id="GO:0005524">
    <property type="term" value="F:ATP binding"/>
    <property type="evidence" value="ECO:0007669"/>
    <property type="project" value="UniProtKB-KW"/>
</dbReference>
<dbReference type="GO" id="GO:0016743">
    <property type="term" value="F:carboxyl- or carbamoyltransferase activity"/>
    <property type="evidence" value="ECO:0007669"/>
    <property type="project" value="UniProtKB-UniRule"/>
</dbReference>
<dbReference type="GO" id="GO:0006633">
    <property type="term" value="P:fatty acid biosynthetic process"/>
    <property type="evidence" value="ECO:0007669"/>
    <property type="project" value="UniProtKB-KW"/>
</dbReference>
<dbReference type="GO" id="GO:2001295">
    <property type="term" value="P:malonyl-CoA biosynthetic process"/>
    <property type="evidence" value="ECO:0007669"/>
    <property type="project" value="UniProtKB-UniRule"/>
</dbReference>
<dbReference type="Gene3D" id="3.90.226.10">
    <property type="entry name" value="2-enoyl-CoA Hydratase, Chain A, domain 1"/>
    <property type="match status" value="1"/>
</dbReference>
<dbReference type="HAMAP" id="MF_00823">
    <property type="entry name" value="AcetylCoA_CT_alpha"/>
    <property type="match status" value="1"/>
</dbReference>
<dbReference type="InterPro" id="IPR001095">
    <property type="entry name" value="Acetyl_CoA_COase_a_su"/>
</dbReference>
<dbReference type="InterPro" id="IPR029045">
    <property type="entry name" value="ClpP/crotonase-like_dom_sf"/>
</dbReference>
<dbReference type="InterPro" id="IPR011763">
    <property type="entry name" value="COA_CT_C"/>
</dbReference>
<dbReference type="NCBIfam" id="TIGR00513">
    <property type="entry name" value="accA"/>
    <property type="match status" value="1"/>
</dbReference>
<dbReference type="NCBIfam" id="NF041504">
    <property type="entry name" value="AccA_sub"/>
    <property type="match status" value="1"/>
</dbReference>
<dbReference type="NCBIfam" id="NF004344">
    <property type="entry name" value="PRK05724.1"/>
    <property type="match status" value="1"/>
</dbReference>
<dbReference type="PANTHER" id="PTHR42853">
    <property type="entry name" value="ACETYL-COENZYME A CARBOXYLASE CARBOXYL TRANSFERASE SUBUNIT ALPHA"/>
    <property type="match status" value="1"/>
</dbReference>
<dbReference type="PANTHER" id="PTHR42853:SF3">
    <property type="entry name" value="ACETYL-COENZYME A CARBOXYLASE CARBOXYL TRANSFERASE SUBUNIT ALPHA, CHLOROPLASTIC"/>
    <property type="match status" value="1"/>
</dbReference>
<dbReference type="Pfam" id="PF03255">
    <property type="entry name" value="ACCA"/>
    <property type="match status" value="1"/>
</dbReference>
<dbReference type="PRINTS" id="PR01069">
    <property type="entry name" value="ACCCTRFRASEA"/>
</dbReference>
<dbReference type="SUPFAM" id="SSF52096">
    <property type="entry name" value="ClpP/crotonase"/>
    <property type="match status" value="1"/>
</dbReference>
<dbReference type="PROSITE" id="PS50989">
    <property type="entry name" value="COA_CT_CTER"/>
    <property type="match status" value="1"/>
</dbReference>
<comment type="function">
    <text evidence="1">Component of the acetyl coenzyme A carboxylase (ACC) complex. First, biotin carboxylase catalyzes the carboxylation of biotin on its carrier protein (BCCP) and then the CO(2) group is transferred by the carboxyltransferase to acetyl-CoA to form malonyl-CoA.</text>
</comment>
<comment type="catalytic activity">
    <reaction evidence="1">
        <text>N(6)-carboxybiotinyl-L-lysyl-[protein] + acetyl-CoA = N(6)-biotinyl-L-lysyl-[protein] + malonyl-CoA</text>
        <dbReference type="Rhea" id="RHEA:54728"/>
        <dbReference type="Rhea" id="RHEA-COMP:10505"/>
        <dbReference type="Rhea" id="RHEA-COMP:10506"/>
        <dbReference type="ChEBI" id="CHEBI:57288"/>
        <dbReference type="ChEBI" id="CHEBI:57384"/>
        <dbReference type="ChEBI" id="CHEBI:83144"/>
        <dbReference type="ChEBI" id="CHEBI:83145"/>
        <dbReference type="EC" id="2.1.3.15"/>
    </reaction>
</comment>
<comment type="pathway">
    <text evidence="1">Lipid metabolism; malonyl-CoA biosynthesis; malonyl-CoA from acetyl-CoA: step 1/1.</text>
</comment>
<comment type="subunit">
    <text evidence="1">Acetyl-CoA carboxylase is a heterohexamer composed of biotin carboxyl carrier protein (AccB), biotin carboxylase (AccC) and two subunits each of ACCase subunit alpha (AccA) and ACCase subunit beta (AccD).</text>
</comment>
<comment type="subcellular location">
    <subcellularLocation>
        <location evidence="1">Cytoplasm</location>
    </subcellularLocation>
</comment>
<comment type="similarity">
    <text evidence="1">Belongs to the AccA family.</text>
</comment>
<accession>B8DHH5</accession>
<reference key="1">
    <citation type="journal article" date="2011" name="J. Bacteriol.">
        <title>Genome sequence of lineage III Listeria monocytogenes strain HCC23.</title>
        <authorList>
            <person name="Steele C.L."/>
            <person name="Donaldson J.R."/>
            <person name="Paul D."/>
            <person name="Banes M.M."/>
            <person name="Arick T."/>
            <person name="Bridges S.M."/>
            <person name="Lawrence M.L."/>
        </authorList>
    </citation>
    <scope>NUCLEOTIDE SEQUENCE [LARGE SCALE GENOMIC DNA]</scope>
    <source>
        <strain>HCC23</strain>
    </source>
</reference>
<organism>
    <name type="scientific">Listeria monocytogenes serotype 4a (strain HCC23)</name>
    <dbReference type="NCBI Taxonomy" id="552536"/>
    <lineage>
        <taxon>Bacteria</taxon>
        <taxon>Bacillati</taxon>
        <taxon>Bacillota</taxon>
        <taxon>Bacilli</taxon>
        <taxon>Bacillales</taxon>
        <taxon>Listeriaceae</taxon>
        <taxon>Listeria</taxon>
    </lineage>
</organism>
<name>ACCA_LISMH</name>
<evidence type="ECO:0000255" key="1">
    <source>
        <dbReference type="HAMAP-Rule" id="MF_00823"/>
    </source>
</evidence>
<evidence type="ECO:0000255" key="2">
    <source>
        <dbReference type="PROSITE-ProRule" id="PRU01137"/>
    </source>
</evidence>